<name>GPMI_SYNJB</name>
<comment type="function">
    <text evidence="1">Catalyzes the interconversion of 2-phosphoglycerate and 3-phosphoglycerate.</text>
</comment>
<comment type="catalytic activity">
    <reaction evidence="1">
        <text>(2R)-2-phosphoglycerate = (2R)-3-phosphoglycerate</text>
        <dbReference type="Rhea" id="RHEA:15901"/>
        <dbReference type="ChEBI" id="CHEBI:58272"/>
        <dbReference type="ChEBI" id="CHEBI:58289"/>
        <dbReference type="EC" id="5.4.2.12"/>
    </reaction>
</comment>
<comment type="cofactor">
    <cofactor evidence="1">
        <name>Mn(2+)</name>
        <dbReference type="ChEBI" id="CHEBI:29035"/>
    </cofactor>
    <text evidence="1">Binds 2 manganese ions per subunit.</text>
</comment>
<comment type="pathway">
    <text evidence="1">Carbohydrate degradation; glycolysis; pyruvate from D-glyceraldehyde 3-phosphate: step 3/5.</text>
</comment>
<comment type="subunit">
    <text evidence="1">Monomer.</text>
</comment>
<comment type="similarity">
    <text evidence="1">Belongs to the BPG-independent phosphoglycerate mutase family.</text>
</comment>
<protein>
    <recommendedName>
        <fullName evidence="1">2,3-bisphosphoglycerate-independent phosphoglycerate mutase</fullName>
        <shortName evidence="1">BPG-independent PGAM</shortName>
        <shortName evidence="1">Phosphoglyceromutase</shortName>
        <shortName evidence="1">iPGM</shortName>
        <ecNumber evidence="1">5.4.2.12</ecNumber>
    </recommendedName>
</protein>
<gene>
    <name evidence="1" type="primary">gpmI</name>
    <name type="ordered locus">CYB_2684</name>
</gene>
<feature type="chain" id="PRO_1000064012" description="2,3-bisphosphoglycerate-independent phosphoglycerate mutase">
    <location>
        <begin position="1"/>
        <end position="530"/>
    </location>
</feature>
<feature type="active site" description="Phosphoserine intermediate" evidence="1">
    <location>
        <position position="65"/>
    </location>
</feature>
<feature type="binding site" evidence="1">
    <location>
        <position position="15"/>
    </location>
    <ligand>
        <name>Mn(2+)</name>
        <dbReference type="ChEBI" id="CHEBI:29035"/>
        <label>2</label>
    </ligand>
</feature>
<feature type="binding site" evidence="1">
    <location>
        <position position="65"/>
    </location>
    <ligand>
        <name>Mn(2+)</name>
        <dbReference type="ChEBI" id="CHEBI:29035"/>
        <label>2</label>
    </ligand>
</feature>
<feature type="binding site" evidence="1">
    <location>
        <position position="126"/>
    </location>
    <ligand>
        <name>substrate</name>
    </ligand>
</feature>
<feature type="binding site" evidence="1">
    <location>
        <begin position="155"/>
        <end position="156"/>
    </location>
    <ligand>
        <name>substrate</name>
    </ligand>
</feature>
<feature type="binding site" evidence="1">
    <location>
        <position position="187"/>
    </location>
    <ligand>
        <name>substrate</name>
    </ligand>
</feature>
<feature type="binding site" evidence="1">
    <location>
        <position position="193"/>
    </location>
    <ligand>
        <name>substrate</name>
    </ligand>
</feature>
<feature type="binding site" evidence="1">
    <location>
        <begin position="257"/>
        <end position="260"/>
    </location>
    <ligand>
        <name>substrate</name>
    </ligand>
</feature>
<feature type="binding site" evidence="1">
    <location>
        <position position="330"/>
    </location>
    <ligand>
        <name>substrate</name>
    </ligand>
</feature>
<feature type="binding site" evidence="1">
    <location>
        <position position="397"/>
    </location>
    <ligand>
        <name>Mn(2+)</name>
        <dbReference type="ChEBI" id="CHEBI:29035"/>
        <label>1</label>
    </ligand>
</feature>
<feature type="binding site" evidence="1">
    <location>
        <position position="401"/>
    </location>
    <ligand>
        <name>Mn(2+)</name>
        <dbReference type="ChEBI" id="CHEBI:29035"/>
        <label>1</label>
    </ligand>
</feature>
<feature type="binding site" evidence="1">
    <location>
        <position position="438"/>
    </location>
    <ligand>
        <name>Mn(2+)</name>
        <dbReference type="ChEBI" id="CHEBI:29035"/>
        <label>2</label>
    </ligand>
</feature>
<feature type="binding site" evidence="1">
    <location>
        <position position="439"/>
    </location>
    <ligand>
        <name>Mn(2+)</name>
        <dbReference type="ChEBI" id="CHEBI:29035"/>
        <label>2</label>
    </ligand>
</feature>
<feature type="binding site" evidence="1">
    <location>
        <position position="456"/>
    </location>
    <ligand>
        <name>Mn(2+)</name>
        <dbReference type="ChEBI" id="CHEBI:29035"/>
        <label>1</label>
    </ligand>
</feature>
<proteinExistence type="inferred from homology"/>
<accession>Q2JIE9</accession>
<sequence length="530" mass="57892">MDSQSVAPVVLVILDGWGYRDALDGNAVLAAETPVLDSLWAAYPHTLLQASGRAVGLPAGQMGNSEVGHLTLGAGRVVPQELVRISDAIETGSLFQDPLLMQVCRQLRERGGRFHFVGLCSEGGVHSHIDHLYGLLKLAAQAEIPAYVHAITDGRDTLPRDGARVLAALEKELQWLGNGVIATLSGRYYAMDRDRRWERTQKAYEIMTQDGPGRGQSAAEVMEAFYAQDLTDEFIPPTRLAPGAVQPGDAVLFFNFRPDRARQLTQAFVCPDFSGFQRPLLPALTFITMTQYEADLPVQVLFKPQNLNHLLGQVVSEAGLKQLRIAETEKYAHVTYFFNGGIEQPFPGEDRILVQSPLVTTYDQAPEMSAVEVTDKAIEAIARREYSLVVLNYANPDMVGHTGNYEATIRALETVDRCLGRLLAAVVDAGGTTLILADHGNAELMWDENGNPWTAHTTNPVPCILVEGERRKIPGCGGDVKLRSNGTLADVAPTLLEILGLPQPPEMTGRSLLQPAEYTILQRQPSPVGR</sequence>
<reference key="1">
    <citation type="journal article" date="2007" name="ISME J.">
        <title>Population level functional diversity in a microbial community revealed by comparative genomic and metagenomic analyses.</title>
        <authorList>
            <person name="Bhaya D."/>
            <person name="Grossman A.R."/>
            <person name="Steunou A.-S."/>
            <person name="Khuri N."/>
            <person name="Cohan F.M."/>
            <person name="Hamamura N."/>
            <person name="Melendrez M.C."/>
            <person name="Bateson M.M."/>
            <person name="Ward D.M."/>
            <person name="Heidelberg J.F."/>
        </authorList>
    </citation>
    <scope>NUCLEOTIDE SEQUENCE [LARGE SCALE GENOMIC DNA]</scope>
    <source>
        <strain>JA-2-3B'a(2-13)</strain>
    </source>
</reference>
<dbReference type="EC" id="5.4.2.12" evidence="1"/>
<dbReference type="EMBL" id="CP000240">
    <property type="protein sequence ID" value="ABD03610.1"/>
    <property type="molecule type" value="Genomic_DNA"/>
</dbReference>
<dbReference type="RefSeq" id="WP_011434228.1">
    <property type="nucleotide sequence ID" value="NC_007776.1"/>
</dbReference>
<dbReference type="SMR" id="Q2JIE9"/>
<dbReference type="STRING" id="321332.CYB_2684"/>
<dbReference type="KEGG" id="cyb:CYB_2684"/>
<dbReference type="eggNOG" id="COG0696">
    <property type="taxonomic scope" value="Bacteria"/>
</dbReference>
<dbReference type="HOGENOM" id="CLU_026099_2_0_3"/>
<dbReference type="OrthoDB" id="9800863at2"/>
<dbReference type="UniPathway" id="UPA00109">
    <property type="reaction ID" value="UER00186"/>
</dbReference>
<dbReference type="Proteomes" id="UP000001938">
    <property type="component" value="Chromosome"/>
</dbReference>
<dbReference type="GO" id="GO:0005829">
    <property type="term" value="C:cytosol"/>
    <property type="evidence" value="ECO:0007669"/>
    <property type="project" value="TreeGrafter"/>
</dbReference>
<dbReference type="GO" id="GO:0030145">
    <property type="term" value="F:manganese ion binding"/>
    <property type="evidence" value="ECO:0007669"/>
    <property type="project" value="UniProtKB-UniRule"/>
</dbReference>
<dbReference type="GO" id="GO:0004619">
    <property type="term" value="F:phosphoglycerate mutase activity"/>
    <property type="evidence" value="ECO:0007669"/>
    <property type="project" value="UniProtKB-EC"/>
</dbReference>
<dbReference type="GO" id="GO:0006007">
    <property type="term" value="P:glucose catabolic process"/>
    <property type="evidence" value="ECO:0007669"/>
    <property type="project" value="InterPro"/>
</dbReference>
<dbReference type="GO" id="GO:0006096">
    <property type="term" value="P:glycolytic process"/>
    <property type="evidence" value="ECO:0007669"/>
    <property type="project" value="UniProtKB-UniRule"/>
</dbReference>
<dbReference type="CDD" id="cd16010">
    <property type="entry name" value="iPGM"/>
    <property type="match status" value="1"/>
</dbReference>
<dbReference type="FunFam" id="3.40.1450.10:FF:000002">
    <property type="entry name" value="2,3-bisphosphoglycerate-independent phosphoglycerate mutase"/>
    <property type="match status" value="1"/>
</dbReference>
<dbReference type="Gene3D" id="3.40.720.10">
    <property type="entry name" value="Alkaline Phosphatase, subunit A"/>
    <property type="match status" value="1"/>
</dbReference>
<dbReference type="Gene3D" id="3.40.1450.10">
    <property type="entry name" value="BPG-independent phosphoglycerate mutase, domain B"/>
    <property type="match status" value="1"/>
</dbReference>
<dbReference type="HAMAP" id="MF_01038">
    <property type="entry name" value="GpmI"/>
    <property type="match status" value="1"/>
</dbReference>
<dbReference type="InterPro" id="IPR017850">
    <property type="entry name" value="Alkaline_phosphatase_core_sf"/>
</dbReference>
<dbReference type="InterPro" id="IPR011258">
    <property type="entry name" value="BPG-indep_PGM_N"/>
</dbReference>
<dbReference type="InterPro" id="IPR006124">
    <property type="entry name" value="Metalloenzyme"/>
</dbReference>
<dbReference type="InterPro" id="IPR036646">
    <property type="entry name" value="PGAM_B_sf"/>
</dbReference>
<dbReference type="InterPro" id="IPR005995">
    <property type="entry name" value="Pgm_bpd_ind"/>
</dbReference>
<dbReference type="NCBIfam" id="TIGR01307">
    <property type="entry name" value="pgm_bpd_ind"/>
    <property type="match status" value="1"/>
</dbReference>
<dbReference type="PANTHER" id="PTHR31637">
    <property type="entry name" value="2,3-BISPHOSPHOGLYCERATE-INDEPENDENT PHOSPHOGLYCERATE MUTASE"/>
    <property type="match status" value="1"/>
</dbReference>
<dbReference type="PANTHER" id="PTHR31637:SF0">
    <property type="entry name" value="2,3-BISPHOSPHOGLYCERATE-INDEPENDENT PHOSPHOGLYCERATE MUTASE"/>
    <property type="match status" value="1"/>
</dbReference>
<dbReference type="Pfam" id="PF06415">
    <property type="entry name" value="iPGM_N"/>
    <property type="match status" value="1"/>
</dbReference>
<dbReference type="Pfam" id="PF01676">
    <property type="entry name" value="Metalloenzyme"/>
    <property type="match status" value="1"/>
</dbReference>
<dbReference type="PIRSF" id="PIRSF001492">
    <property type="entry name" value="IPGAM"/>
    <property type="match status" value="1"/>
</dbReference>
<dbReference type="SUPFAM" id="SSF64158">
    <property type="entry name" value="2,3-Bisphosphoglycerate-independent phosphoglycerate mutase, substrate-binding domain"/>
    <property type="match status" value="1"/>
</dbReference>
<dbReference type="SUPFAM" id="SSF53649">
    <property type="entry name" value="Alkaline phosphatase-like"/>
    <property type="match status" value="1"/>
</dbReference>
<organism>
    <name type="scientific">Synechococcus sp. (strain JA-2-3B'a(2-13))</name>
    <name type="common">Cyanobacteria bacterium Yellowstone B-Prime</name>
    <dbReference type="NCBI Taxonomy" id="321332"/>
    <lineage>
        <taxon>Bacteria</taxon>
        <taxon>Bacillati</taxon>
        <taxon>Cyanobacteriota</taxon>
        <taxon>Cyanophyceae</taxon>
        <taxon>Synechococcales</taxon>
        <taxon>Synechococcaceae</taxon>
        <taxon>Synechococcus</taxon>
    </lineage>
</organism>
<evidence type="ECO:0000255" key="1">
    <source>
        <dbReference type="HAMAP-Rule" id="MF_01038"/>
    </source>
</evidence>
<keyword id="KW-0324">Glycolysis</keyword>
<keyword id="KW-0413">Isomerase</keyword>
<keyword id="KW-0464">Manganese</keyword>
<keyword id="KW-0479">Metal-binding</keyword>
<keyword id="KW-1185">Reference proteome</keyword>